<evidence type="ECO:0000255" key="1">
    <source>
        <dbReference type="HAMAP-Rule" id="MF_03103"/>
    </source>
</evidence>
<evidence type="ECO:0000256" key="2">
    <source>
        <dbReference type="SAM" id="MobiDB-lite"/>
    </source>
</evidence>
<accession>A3LSW7</accession>
<dbReference type="EMBL" id="CP000498">
    <property type="protein sequence ID" value="ABN66304.2"/>
    <property type="molecule type" value="Genomic_DNA"/>
</dbReference>
<dbReference type="RefSeq" id="XP_001384333.2">
    <property type="nucleotide sequence ID" value="XM_001384296.1"/>
</dbReference>
<dbReference type="SMR" id="A3LSW7"/>
<dbReference type="FunCoup" id="A3LSW7">
    <property type="interactions" value="93"/>
</dbReference>
<dbReference type="STRING" id="322104.A3LSW7"/>
<dbReference type="GeneID" id="4838635"/>
<dbReference type="KEGG" id="pic:PICST_59052"/>
<dbReference type="eggNOG" id="ENOG502QUUW">
    <property type="taxonomic scope" value="Eukaryota"/>
</dbReference>
<dbReference type="HOGENOM" id="CLU_032730_2_0_1"/>
<dbReference type="InParanoid" id="A3LSW7"/>
<dbReference type="OMA" id="WSFTQGL"/>
<dbReference type="OrthoDB" id="5599157at2759"/>
<dbReference type="Proteomes" id="UP000002258">
    <property type="component" value="Chromosome 4"/>
</dbReference>
<dbReference type="GO" id="GO:0005789">
    <property type="term" value="C:endoplasmic reticulum membrane"/>
    <property type="evidence" value="ECO:0007669"/>
    <property type="project" value="UniProtKB-SubCell"/>
</dbReference>
<dbReference type="GO" id="GO:0032865">
    <property type="term" value="C:ERMES complex"/>
    <property type="evidence" value="ECO:0007669"/>
    <property type="project" value="UniProtKB-UniRule"/>
</dbReference>
<dbReference type="GO" id="GO:0008289">
    <property type="term" value="F:lipid binding"/>
    <property type="evidence" value="ECO:0007669"/>
    <property type="project" value="UniProtKB-KW"/>
</dbReference>
<dbReference type="GO" id="GO:0000002">
    <property type="term" value="P:mitochondrial genome maintenance"/>
    <property type="evidence" value="ECO:0007669"/>
    <property type="project" value="UniProtKB-UniRule"/>
</dbReference>
<dbReference type="GO" id="GO:1990456">
    <property type="term" value="P:mitochondrion-endoplasmic reticulum membrane tethering"/>
    <property type="evidence" value="ECO:0007669"/>
    <property type="project" value="TreeGrafter"/>
</dbReference>
<dbReference type="GO" id="GO:0015914">
    <property type="term" value="P:phospholipid transport"/>
    <property type="evidence" value="ECO:0007669"/>
    <property type="project" value="TreeGrafter"/>
</dbReference>
<dbReference type="GO" id="GO:0045040">
    <property type="term" value="P:protein insertion into mitochondrial outer membrane"/>
    <property type="evidence" value="ECO:0007669"/>
    <property type="project" value="UniProtKB-UniRule"/>
</dbReference>
<dbReference type="CDD" id="cd21671">
    <property type="entry name" value="SMP_Mmm1"/>
    <property type="match status" value="1"/>
</dbReference>
<dbReference type="HAMAP" id="MF_03103">
    <property type="entry name" value="Mmm1"/>
    <property type="match status" value="1"/>
</dbReference>
<dbReference type="InterPro" id="IPR027537">
    <property type="entry name" value="Mmm1"/>
</dbReference>
<dbReference type="InterPro" id="IPR019411">
    <property type="entry name" value="MMM1_dom"/>
</dbReference>
<dbReference type="InterPro" id="IPR031468">
    <property type="entry name" value="SMP_LBD"/>
</dbReference>
<dbReference type="PANTHER" id="PTHR13466:SF0">
    <property type="entry name" value="SMP-LTD DOMAIN-CONTAINING PROTEIN"/>
    <property type="match status" value="1"/>
</dbReference>
<dbReference type="PANTHER" id="PTHR13466">
    <property type="entry name" value="TEX2 PROTEIN-RELATED"/>
    <property type="match status" value="1"/>
</dbReference>
<dbReference type="Pfam" id="PF10296">
    <property type="entry name" value="MMM1"/>
    <property type="match status" value="1"/>
</dbReference>
<dbReference type="PROSITE" id="PS51847">
    <property type="entry name" value="SMP"/>
    <property type="match status" value="1"/>
</dbReference>
<reference key="1">
    <citation type="journal article" date="2007" name="Nat. Biotechnol.">
        <title>Genome sequence of the lignocellulose-bioconverting and xylose-fermenting yeast Pichia stipitis.</title>
        <authorList>
            <person name="Jeffries T.W."/>
            <person name="Grigoriev I.V."/>
            <person name="Grimwood J."/>
            <person name="Laplaza J.M."/>
            <person name="Aerts A."/>
            <person name="Salamov A."/>
            <person name="Schmutz J."/>
            <person name="Lindquist E."/>
            <person name="Dehal P."/>
            <person name="Shapiro H."/>
            <person name="Jin Y.-S."/>
            <person name="Passoth V."/>
            <person name="Richardson P.M."/>
        </authorList>
    </citation>
    <scope>NUCLEOTIDE SEQUENCE [LARGE SCALE GENOMIC DNA]</scope>
    <source>
        <strain>ATCC 58785 / CBS 6054 / NBRC 10063 / NRRL Y-11545</strain>
    </source>
</reference>
<organism>
    <name type="scientific">Scheffersomyces stipitis (strain ATCC 58785 / CBS 6054 / NBRC 10063 / NRRL Y-11545)</name>
    <name type="common">Yeast</name>
    <name type="synonym">Pichia stipitis</name>
    <dbReference type="NCBI Taxonomy" id="322104"/>
    <lineage>
        <taxon>Eukaryota</taxon>
        <taxon>Fungi</taxon>
        <taxon>Dikarya</taxon>
        <taxon>Ascomycota</taxon>
        <taxon>Saccharomycotina</taxon>
        <taxon>Pichiomycetes</taxon>
        <taxon>Debaryomycetaceae</taxon>
        <taxon>Scheffersomyces</taxon>
    </lineage>
</organism>
<sequence length="443" mass="49426">MADLETSDLSRVLPSSNLLSLEQLQEQLKRHRDELFQQQQDSHVLGSKPDDSLNNNYLLSHQYHDSQVYIPSNTWSFTQGLIVGQLSVVFVIVIFIKFFVFAESSPALAKSSITKDASVVIVKRDKKDQSSSDDADPDDDSETTASNAKVAAILEKTYYDVDNHSPESLDWFNVLVAQTIAQLRSEALLSDNIYHSLNNFLLKSELPEYLDKINLTEIDIGDDFPIFSNCRIKHSKDGSGRLEAKIDVDLSDTLTLGIETKLLLNHPRPLTAVLPVQLSVSMVRFSGCLTVSLINTADPEFAELSAHNSPEPGEPMSRSHSAGSPGGDSSHDEVISTPDSSSHTAQRKHSKDDPNDGTALMFSFSPDYRLEFTVKSLIGARAKLQDVPKISSLIENRLRAWFIERCIEPRFQVVRLPSLWPRRKNTREQVTNKNGDKVEDGSN</sequence>
<feature type="chain" id="PRO_0000384248" description="Maintenance of mitochondrial morphology protein 1">
    <location>
        <begin position="1"/>
        <end position="443"/>
    </location>
</feature>
<feature type="topological domain" description="Lumenal" evidence="1">
    <location>
        <begin position="1"/>
        <end position="80"/>
    </location>
</feature>
<feature type="transmembrane region" description="Helical" evidence="1">
    <location>
        <begin position="81"/>
        <end position="101"/>
    </location>
</feature>
<feature type="topological domain" description="Cytoplasmic" evidence="1">
    <location>
        <begin position="102"/>
        <end position="443"/>
    </location>
</feature>
<feature type="domain" description="SMP-LTD" evidence="1">
    <location>
        <begin position="165"/>
        <end position="417"/>
    </location>
</feature>
<feature type="region of interest" description="Disordered" evidence="2">
    <location>
        <begin position="126"/>
        <end position="146"/>
    </location>
</feature>
<feature type="region of interest" description="Disordered" evidence="2">
    <location>
        <begin position="304"/>
        <end position="358"/>
    </location>
</feature>
<feature type="compositionally biased region" description="Acidic residues" evidence="2">
    <location>
        <begin position="131"/>
        <end position="142"/>
    </location>
</feature>
<gene>
    <name evidence="1" type="primary">MMM1</name>
    <name type="ORF">PICST_59052</name>
</gene>
<keyword id="KW-0256">Endoplasmic reticulum</keyword>
<keyword id="KW-0445">Lipid transport</keyword>
<keyword id="KW-0446">Lipid-binding</keyword>
<keyword id="KW-0472">Membrane</keyword>
<keyword id="KW-1185">Reference proteome</keyword>
<keyword id="KW-0812">Transmembrane</keyword>
<keyword id="KW-1133">Transmembrane helix</keyword>
<keyword id="KW-0813">Transport</keyword>
<name>MMM1_PICST</name>
<proteinExistence type="inferred from homology"/>
<protein>
    <recommendedName>
        <fullName evidence="1">Maintenance of mitochondrial morphology protein 1</fullName>
    </recommendedName>
</protein>
<comment type="function">
    <text evidence="1">Component of the ERMES/MDM complex, which serves as a molecular tether to connect the endoplasmic reticulum (ER) and mitochondria. Components of this complex are involved in the control of mitochondrial shape and protein biogenesis, and function in nonvesicular lipid trafficking between the ER and mitochondria. The MDM12-MMM1 subcomplex functions in the major beta-barrel assembly pathway that is responsible for biogenesis of all outer membrane beta-barrel proteins, and acts in a late step after the SAM complex. The MDM10-MDM12-MMM1 subcomplex further acts in the TOM40-specific pathway after the action of the MDM12-MMM1 complex. Essential for establishing and maintaining the structure of mitochondria and maintenance of mtDNA nucleoids.</text>
</comment>
<comment type="subunit">
    <text evidence="1">Homodimer. Component of the ER-mitochondria encounter structure (ERMES) or MDM complex, composed of MMM1, MDM10, MDM12 and MDM34. A MMM1 homodimer associates with one molecule of MDM12 on each side in a pairwise head-to-tail manner, and the SMP-LTD domains of MMM1 and MDM12 generate a continuous hydrophobic tunnel for phospholipid trafficking.</text>
</comment>
<comment type="subcellular location">
    <subcellularLocation>
        <location evidence="1">Endoplasmic reticulum membrane</location>
        <topology evidence="1">Single-pass type I membrane protein</topology>
    </subcellularLocation>
    <text evidence="1">The ERMES/MDM complex localizes to a few discrete foci (around 10 per single cell), that represent mitochondria-endoplasmic reticulum junctions. These foci are often found next to mtDNA nucleoids.</text>
</comment>
<comment type="domain">
    <text evidence="1">The SMP-LTD domain is a barrel-like domain that can bind various types of glycerophospholipids in its interior and mediate their transfer between two adjacent bilayers.</text>
</comment>
<comment type="similarity">
    <text evidence="1">Belongs to the MMM1 family.</text>
</comment>